<comment type="catalytic activity">
    <reaction evidence="1">
        <text>(2R)-3-phosphoglycerate + ATP = (2R)-3-phospho-glyceroyl phosphate + ADP</text>
        <dbReference type="Rhea" id="RHEA:14801"/>
        <dbReference type="ChEBI" id="CHEBI:30616"/>
        <dbReference type="ChEBI" id="CHEBI:57604"/>
        <dbReference type="ChEBI" id="CHEBI:58272"/>
        <dbReference type="ChEBI" id="CHEBI:456216"/>
        <dbReference type="EC" id="2.7.2.3"/>
    </reaction>
</comment>
<comment type="pathway">
    <text evidence="1">Carbohydrate degradation; glycolysis; pyruvate from D-glyceraldehyde 3-phosphate: step 2/5.</text>
</comment>
<comment type="subunit">
    <text evidence="1">Monomer.</text>
</comment>
<comment type="subcellular location">
    <subcellularLocation>
        <location evidence="1">Cytoplasm</location>
    </subcellularLocation>
</comment>
<comment type="similarity">
    <text evidence="1">Belongs to the phosphoglycerate kinase family.</text>
</comment>
<organism>
    <name type="scientific">Escherichia coli O9:H4 (strain HS)</name>
    <dbReference type="NCBI Taxonomy" id="331112"/>
    <lineage>
        <taxon>Bacteria</taxon>
        <taxon>Pseudomonadati</taxon>
        <taxon>Pseudomonadota</taxon>
        <taxon>Gammaproteobacteria</taxon>
        <taxon>Enterobacterales</taxon>
        <taxon>Enterobacteriaceae</taxon>
        <taxon>Escherichia</taxon>
    </lineage>
</organism>
<protein>
    <recommendedName>
        <fullName evidence="1">Phosphoglycerate kinase</fullName>
        <ecNumber evidence="1">2.7.2.3</ecNumber>
    </recommendedName>
</protein>
<gene>
    <name evidence="1" type="primary">pgk</name>
    <name type="ordered locus">EcHS_A3084</name>
</gene>
<name>PGK_ECOHS</name>
<feature type="chain" id="PRO_1000057983" description="Phosphoglycerate kinase">
    <location>
        <begin position="1"/>
        <end position="387"/>
    </location>
</feature>
<feature type="binding site" evidence="1">
    <location>
        <begin position="21"/>
        <end position="23"/>
    </location>
    <ligand>
        <name>substrate</name>
    </ligand>
</feature>
<feature type="binding site" evidence="1">
    <location>
        <position position="36"/>
    </location>
    <ligand>
        <name>substrate</name>
    </ligand>
</feature>
<feature type="binding site" evidence="1">
    <location>
        <begin position="59"/>
        <end position="62"/>
    </location>
    <ligand>
        <name>substrate</name>
    </ligand>
</feature>
<feature type="binding site" evidence="1">
    <location>
        <position position="113"/>
    </location>
    <ligand>
        <name>substrate</name>
    </ligand>
</feature>
<feature type="binding site" evidence="1">
    <location>
        <position position="146"/>
    </location>
    <ligand>
        <name>substrate</name>
    </ligand>
</feature>
<feature type="binding site" evidence="1">
    <location>
        <position position="197"/>
    </location>
    <ligand>
        <name>ATP</name>
        <dbReference type="ChEBI" id="CHEBI:30616"/>
    </ligand>
</feature>
<feature type="binding site" evidence="1">
    <location>
        <position position="314"/>
    </location>
    <ligand>
        <name>ATP</name>
        <dbReference type="ChEBI" id="CHEBI:30616"/>
    </ligand>
</feature>
<feature type="binding site" evidence="1">
    <location>
        <begin position="340"/>
        <end position="343"/>
    </location>
    <ligand>
        <name>ATP</name>
        <dbReference type="ChEBI" id="CHEBI:30616"/>
    </ligand>
</feature>
<feature type="modified residue" description="N6-acetyllysine" evidence="1">
    <location>
        <position position="84"/>
    </location>
</feature>
<reference key="1">
    <citation type="journal article" date="2008" name="J. Bacteriol.">
        <title>The pangenome structure of Escherichia coli: comparative genomic analysis of E. coli commensal and pathogenic isolates.</title>
        <authorList>
            <person name="Rasko D.A."/>
            <person name="Rosovitz M.J."/>
            <person name="Myers G.S.A."/>
            <person name="Mongodin E.F."/>
            <person name="Fricke W.F."/>
            <person name="Gajer P."/>
            <person name="Crabtree J."/>
            <person name="Sebaihia M."/>
            <person name="Thomson N.R."/>
            <person name="Chaudhuri R."/>
            <person name="Henderson I.R."/>
            <person name="Sperandio V."/>
            <person name="Ravel J."/>
        </authorList>
    </citation>
    <scope>NUCLEOTIDE SEQUENCE [LARGE SCALE GENOMIC DNA]</scope>
    <source>
        <strain>HS</strain>
    </source>
</reference>
<sequence length="387" mass="41104">MSVIKMTDLDLAGKRVFIRADLNVPVKDGKVTSDARIRASLPTIELALKQGAKVMVTSHLGRPTEGEYNEEFSLLPVVNYLKDKLSNPVRLVKDYLDGVDVAEGELVVLENVRFNKGEKKDDETLSKKYAALCDVFVMDAFGTAHRAQASTHGIGKFADVACAGPLLAAELDALGKALKEPARPMVAIVGGSKVSTKLTVLDSLSKIADQLIVGGGIANTFIAAQGHDVGKSLYEADLVDEAKRLLSTCNIPVPSDVRVATEFSETAPATLKSVNDVKADEQILDIGDASAQELAEILKNAKTILWNGPVGVFEFPNFRKGTEIVANAIADSEAFSIAGGGDTLAAIDLFGIADKISYISTGGGAFLEFVEGKVLPAVAMLEERAKK</sequence>
<accession>A8A466</accession>
<proteinExistence type="inferred from homology"/>
<dbReference type="EC" id="2.7.2.3" evidence="1"/>
<dbReference type="EMBL" id="CP000802">
    <property type="protein sequence ID" value="ABV07320.1"/>
    <property type="molecule type" value="Genomic_DNA"/>
</dbReference>
<dbReference type="RefSeq" id="WP_012135971.1">
    <property type="nucleotide sequence ID" value="NC_009800.1"/>
</dbReference>
<dbReference type="SMR" id="A8A466"/>
<dbReference type="KEGG" id="ecx:EcHS_A3084"/>
<dbReference type="HOGENOM" id="CLU_025427_0_2_6"/>
<dbReference type="UniPathway" id="UPA00109">
    <property type="reaction ID" value="UER00185"/>
</dbReference>
<dbReference type="GO" id="GO:0005829">
    <property type="term" value="C:cytosol"/>
    <property type="evidence" value="ECO:0007669"/>
    <property type="project" value="TreeGrafter"/>
</dbReference>
<dbReference type="GO" id="GO:0043531">
    <property type="term" value="F:ADP binding"/>
    <property type="evidence" value="ECO:0007669"/>
    <property type="project" value="TreeGrafter"/>
</dbReference>
<dbReference type="GO" id="GO:0005524">
    <property type="term" value="F:ATP binding"/>
    <property type="evidence" value="ECO:0007669"/>
    <property type="project" value="UniProtKB-KW"/>
</dbReference>
<dbReference type="GO" id="GO:0004618">
    <property type="term" value="F:phosphoglycerate kinase activity"/>
    <property type="evidence" value="ECO:0007669"/>
    <property type="project" value="UniProtKB-UniRule"/>
</dbReference>
<dbReference type="GO" id="GO:0006094">
    <property type="term" value="P:gluconeogenesis"/>
    <property type="evidence" value="ECO:0007669"/>
    <property type="project" value="TreeGrafter"/>
</dbReference>
<dbReference type="GO" id="GO:0006096">
    <property type="term" value="P:glycolytic process"/>
    <property type="evidence" value="ECO:0007669"/>
    <property type="project" value="UniProtKB-UniRule"/>
</dbReference>
<dbReference type="FunFam" id="3.40.50.1260:FF:000001">
    <property type="entry name" value="Phosphoglycerate kinase"/>
    <property type="match status" value="1"/>
</dbReference>
<dbReference type="FunFam" id="3.40.50.1260:FF:000002">
    <property type="entry name" value="Phosphoglycerate kinase"/>
    <property type="match status" value="1"/>
</dbReference>
<dbReference type="Gene3D" id="3.40.50.1260">
    <property type="entry name" value="Phosphoglycerate kinase, N-terminal domain"/>
    <property type="match status" value="2"/>
</dbReference>
<dbReference type="HAMAP" id="MF_00145">
    <property type="entry name" value="Phosphoglyc_kinase"/>
    <property type="match status" value="1"/>
</dbReference>
<dbReference type="InterPro" id="IPR001576">
    <property type="entry name" value="Phosphoglycerate_kinase"/>
</dbReference>
<dbReference type="InterPro" id="IPR015911">
    <property type="entry name" value="Phosphoglycerate_kinase_CS"/>
</dbReference>
<dbReference type="InterPro" id="IPR015824">
    <property type="entry name" value="Phosphoglycerate_kinase_N"/>
</dbReference>
<dbReference type="InterPro" id="IPR036043">
    <property type="entry name" value="Phosphoglycerate_kinase_sf"/>
</dbReference>
<dbReference type="PANTHER" id="PTHR11406">
    <property type="entry name" value="PHOSPHOGLYCERATE KINASE"/>
    <property type="match status" value="1"/>
</dbReference>
<dbReference type="PANTHER" id="PTHR11406:SF23">
    <property type="entry name" value="PHOSPHOGLYCERATE KINASE 1, CHLOROPLASTIC-RELATED"/>
    <property type="match status" value="1"/>
</dbReference>
<dbReference type="Pfam" id="PF00162">
    <property type="entry name" value="PGK"/>
    <property type="match status" value="1"/>
</dbReference>
<dbReference type="PIRSF" id="PIRSF000724">
    <property type="entry name" value="Pgk"/>
    <property type="match status" value="1"/>
</dbReference>
<dbReference type="PRINTS" id="PR00477">
    <property type="entry name" value="PHGLYCKINASE"/>
</dbReference>
<dbReference type="SUPFAM" id="SSF53748">
    <property type="entry name" value="Phosphoglycerate kinase"/>
    <property type="match status" value="1"/>
</dbReference>
<dbReference type="PROSITE" id="PS00111">
    <property type="entry name" value="PGLYCERATE_KINASE"/>
    <property type="match status" value="1"/>
</dbReference>
<keyword id="KW-0007">Acetylation</keyword>
<keyword id="KW-0067">ATP-binding</keyword>
<keyword id="KW-0963">Cytoplasm</keyword>
<keyword id="KW-0324">Glycolysis</keyword>
<keyword id="KW-0418">Kinase</keyword>
<keyword id="KW-0547">Nucleotide-binding</keyword>
<keyword id="KW-0808">Transferase</keyword>
<evidence type="ECO:0000255" key="1">
    <source>
        <dbReference type="HAMAP-Rule" id="MF_00145"/>
    </source>
</evidence>